<sequence>MAEIILNVEVRDGAGTGNARATRRAGKVPGVLYGGGKAPVNIAVKANEFRKSLYTGKLLGHLVTLQYGEEKQSVIAKAVQFHPVTDEPVHFDLYRVDEHQLIKIEVPVHFKNHETSVGLKKGGTLEVIRHTVELACPADKIPEELVIDLAGHDIGDVIRISEVKLPEGVKPAMDRDFVIANVKASSAAQSDAGDTTA</sequence>
<protein>
    <recommendedName>
        <fullName evidence="1">Large ribosomal subunit protein bL25</fullName>
    </recommendedName>
    <alternativeName>
        <fullName evidence="2">50S ribosomal protein L25</fullName>
    </alternativeName>
    <alternativeName>
        <fullName evidence="1">General stress protein CTC</fullName>
    </alternativeName>
</protein>
<comment type="function">
    <text evidence="1">This is one of the proteins that binds to the 5S RNA in the ribosome where it forms part of the central protuberance.</text>
</comment>
<comment type="subunit">
    <text evidence="1">Part of the 50S ribosomal subunit; part of the 5S rRNA/L5/L18/L25 subcomplex. Contacts the 5S rRNA. Binds to the 5S rRNA independently of L5 and L18.</text>
</comment>
<comment type="similarity">
    <text evidence="1">Belongs to the bacterial ribosomal protein bL25 family. CTC subfamily.</text>
</comment>
<organism>
    <name type="scientific">Caulobacter vibrioides (strain ATCC 19089 / CIP 103742 / CB 15)</name>
    <name type="common">Caulobacter crescentus</name>
    <dbReference type="NCBI Taxonomy" id="190650"/>
    <lineage>
        <taxon>Bacteria</taxon>
        <taxon>Pseudomonadati</taxon>
        <taxon>Pseudomonadota</taxon>
        <taxon>Alphaproteobacteria</taxon>
        <taxon>Caulobacterales</taxon>
        <taxon>Caulobacteraceae</taxon>
        <taxon>Caulobacter</taxon>
    </lineage>
</organism>
<evidence type="ECO:0000255" key="1">
    <source>
        <dbReference type="HAMAP-Rule" id="MF_01334"/>
    </source>
</evidence>
<evidence type="ECO:0000305" key="2"/>
<name>RL25_CAUVC</name>
<keyword id="KW-1185">Reference proteome</keyword>
<keyword id="KW-0687">Ribonucleoprotein</keyword>
<keyword id="KW-0689">Ribosomal protein</keyword>
<keyword id="KW-0694">RNA-binding</keyword>
<keyword id="KW-0699">rRNA-binding</keyword>
<accession>Q9AAV8</accession>
<feature type="chain" id="PRO_0000181531" description="Large ribosomal subunit protein bL25">
    <location>
        <begin position="1"/>
        <end position="197"/>
    </location>
</feature>
<dbReference type="EMBL" id="AE005673">
    <property type="protein sequence ID" value="AAK22472.1"/>
    <property type="molecule type" value="Genomic_DNA"/>
</dbReference>
<dbReference type="PIR" id="D87309">
    <property type="entry name" value="D87309"/>
</dbReference>
<dbReference type="RefSeq" id="NP_419304.1">
    <property type="nucleotide sequence ID" value="NC_002696.2"/>
</dbReference>
<dbReference type="RefSeq" id="WP_010918373.1">
    <property type="nucleotide sequence ID" value="NC_002696.2"/>
</dbReference>
<dbReference type="SMR" id="Q9AAV8"/>
<dbReference type="STRING" id="190650.CC_0485"/>
<dbReference type="EnsemblBacteria" id="AAK22472">
    <property type="protein sequence ID" value="AAK22472"/>
    <property type="gene ID" value="CC_0485"/>
</dbReference>
<dbReference type="KEGG" id="ccr:CC_0485"/>
<dbReference type="PATRIC" id="fig|190650.5.peg.492"/>
<dbReference type="eggNOG" id="COG1825">
    <property type="taxonomic scope" value="Bacteria"/>
</dbReference>
<dbReference type="HOGENOM" id="CLU_075939_0_0_5"/>
<dbReference type="BioCyc" id="CAULO:CC0485-MONOMER"/>
<dbReference type="Proteomes" id="UP000001816">
    <property type="component" value="Chromosome"/>
</dbReference>
<dbReference type="GO" id="GO:0022625">
    <property type="term" value="C:cytosolic large ribosomal subunit"/>
    <property type="evidence" value="ECO:0007669"/>
    <property type="project" value="TreeGrafter"/>
</dbReference>
<dbReference type="GO" id="GO:0008097">
    <property type="term" value="F:5S rRNA binding"/>
    <property type="evidence" value="ECO:0007669"/>
    <property type="project" value="InterPro"/>
</dbReference>
<dbReference type="GO" id="GO:0003735">
    <property type="term" value="F:structural constituent of ribosome"/>
    <property type="evidence" value="ECO:0007669"/>
    <property type="project" value="InterPro"/>
</dbReference>
<dbReference type="GO" id="GO:0006412">
    <property type="term" value="P:translation"/>
    <property type="evidence" value="ECO:0007669"/>
    <property type="project" value="UniProtKB-UniRule"/>
</dbReference>
<dbReference type="CDD" id="cd00495">
    <property type="entry name" value="Ribosomal_L25_TL5_CTC"/>
    <property type="match status" value="1"/>
</dbReference>
<dbReference type="Gene3D" id="2.170.120.20">
    <property type="entry name" value="Ribosomal protein L25, beta domain"/>
    <property type="match status" value="1"/>
</dbReference>
<dbReference type="Gene3D" id="2.40.240.10">
    <property type="entry name" value="Ribosomal Protein L25, Chain P"/>
    <property type="match status" value="1"/>
</dbReference>
<dbReference type="HAMAP" id="MF_01334">
    <property type="entry name" value="Ribosomal_bL25_CTC"/>
    <property type="match status" value="1"/>
</dbReference>
<dbReference type="InterPro" id="IPR020056">
    <property type="entry name" value="Rbsml_bL25/Gln-tRNA_synth_N"/>
</dbReference>
<dbReference type="InterPro" id="IPR011035">
    <property type="entry name" value="Ribosomal_bL25/Gln-tRNA_synth"/>
</dbReference>
<dbReference type="InterPro" id="IPR020057">
    <property type="entry name" value="Ribosomal_bL25_b-dom"/>
</dbReference>
<dbReference type="InterPro" id="IPR037121">
    <property type="entry name" value="Ribosomal_bL25_C"/>
</dbReference>
<dbReference type="InterPro" id="IPR001021">
    <property type="entry name" value="Ribosomal_bL25_long"/>
</dbReference>
<dbReference type="InterPro" id="IPR029751">
    <property type="entry name" value="Ribosomal_L25_dom"/>
</dbReference>
<dbReference type="InterPro" id="IPR020930">
    <property type="entry name" value="Ribosomal_uL5_bac-type"/>
</dbReference>
<dbReference type="NCBIfam" id="TIGR00731">
    <property type="entry name" value="bL25_bact_ctc"/>
    <property type="match status" value="1"/>
</dbReference>
<dbReference type="NCBIfam" id="NF004128">
    <property type="entry name" value="PRK05618.1-2"/>
    <property type="match status" value="1"/>
</dbReference>
<dbReference type="PANTHER" id="PTHR33284">
    <property type="entry name" value="RIBOSOMAL PROTEIN L25/GLN-TRNA SYNTHETASE, ANTI-CODON-BINDING DOMAIN-CONTAINING PROTEIN"/>
    <property type="match status" value="1"/>
</dbReference>
<dbReference type="PANTHER" id="PTHR33284:SF1">
    <property type="entry name" value="RIBOSOMAL PROTEIN L25_GLN-TRNA SYNTHETASE, ANTI-CODON-BINDING DOMAIN-CONTAINING PROTEIN"/>
    <property type="match status" value="1"/>
</dbReference>
<dbReference type="Pfam" id="PF01386">
    <property type="entry name" value="Ribosomal_L25p"/>
    <property type="match status" value="1"/>
</dbReference>
<dbReference type="Pfam" id="PF14693">
    <property type="entry name" value="Ribosomal_TL5_C"/>
    <property type="match status" value="1"/>
</dbReference>
<dbReference type="SUPFAM" id="SSF50715">
    <property type="entry name" value="Ribosomal protein L25-like"/>
    <property type="match status" value="1"/>
</dbReference>
<proteinExistence type="inferred from homology"/>
<reference key="1">
    <citation type="journal article" date="2001" name="Proc. Natl. Acad. Sci. U.S.A.">
        <title>Complete genome sequence of Caulobacter crescentus.</title>
        <authorList>
            <person name="Nierman W.C."/>
            <person name="Feldblyum T.V."/>
            <person name="Laub M.T."/>
            <person name="Paulsen I.T."/>
            <person name="Nelson K.E."/>
            <person name="Eisen J.A."/>
            <person name="Heidelberg J.F."/>
            <person name="Alley M.R.K."/>
            <person name="Ohta N."/>
            <person name="Maddock J.R."/>
            <person name="Potocka I."/>
            <person name="Nelson W.C."/>
            <person name="Newton A."/>
            <person name="Stephens C."/>
            <person name="Phadke N.D."/>
            <person name="Ely B."/>
            <person name="DeBoy R.T."/>
            <person name="Dodson R.J."/>
            <person name="Durkin A.S."/>
            <person name="Gwinn M.L."/>
            <person name="Haft D.H."/>
            <person name="Kolonay J.F."/>
            <person name="Smit J."/>
            <person name="Craven M.B."/>
            <person name="Khouri H.M."/>
            <person name="Shetty J."/>
            <person name="Berry K.J."/>
            <person name="Utterback T.R."/>
            <person name="Tran K."/>
            <person name="Wolf A.M."/>
            <person name="Vamathevan J.J."/>
            <person name="Ermolaeva M.D."/>
            <person name="White O."/>
            <person name="Salzberg S.L."/>
            <person name="Venter J.C."/>
            <person name="Shapiro L."/>
            <person name="Fraser C.M."/>
        </authorList>
    </citation>
    <scope>NUCLEOTIDE SEQUENCE [LARGE SCALE GENOMIC DNA]</scope>
    <source>
        <strain>ATCC 19089 / CIP 103742 / CB 15</strain>
    </source>
</reference>
<gene>
    <name evidence="1" type="primary">rplY</name>
    <name evidence="1" type="synonym">ctc</name>
    <name type="ordered locus">CC_0485</name>
</gene>